<feature type="signal peptide" evidence="1 3 4">
    <location>
        <begin position="1"/>
        <end position="24"/>
    </location>
</feature>
<feature type="chain" id="PRO_0000014353" description="Trypsin inhibitor CMe">
    <location>
        <begin position="25"/>
        <end position="148"/>
    </location>
</feature>
<feature type="site" description="Interaction with trypsin" evidence="6">
    <location>
        <position position="57"/>
    </location>
</feature>
<feature type="sequence conflict" description="In Ref. 4; CAA11029/CAA11030/CAB64342." evidence="6" ref="4">
    <original>L</original>
    <variation>I</variation>
    <location>
        <position position="8"/>
    </location>
</feature>
<feature type="sequence conflict" description="In Ref. 3; CAA67192 and 4; CAB64342." evidence="6" ref="3 4">
    <original>S</original>
    <variation>M</variation>
    <location>
        <position position="28"/>
    </location>
</feature>
<feature type="sequence conflict" description="In Ref. 3; CAA67192 and 4; CAB64342." evidence="6" ref="3 4">
    <original>A</original>
    <variation>E</variation>
    <location>
        <position position="34"/>
    </location>
</feature>
<feature type="sequence conflict" description="In Ref. 3; CAA67192 and 4; CAB64342." evidence="6" ref="3 4">
    <original>I</original>
    <variation>L</variation>
    <location>
        <position position="51"/>
    </location>
</feature>
<feature type="sequence conflict" description="In Ref. 3; CAA67192 and 4; CAB64342." evidence="6" ref="3 4">
    <original>A</original>
    <variation>V</variation>
    <location>
        <position position="76"/>
    </location>
</feature>
<feature type="sequence conflict" description="In Ref. 4; CAA11029." evidence="6" ref="4">
    <original>Q</original>
    <variation>E</variation>
    <location>
        <position position="88"/>
    </location>
</feature>
<feature type="sequence conflict" description="In Ref. 4; CAA11029." evidence="6" ref="4">
    <original>A</original>
    <variation>R</variation>
    <location>
        <position position="100"/>
    </location>
</feature>
<feature type="sequence conflict" description="In Ref. 4; CAA11029/CAA11030." evidence="6" ref="4">
    <original>S</original>
    <variation>T</variation>
    <location>
        <position position="105"/>
    </location>
</feature>
<feature type="sequence conflict" description="In Ref. 3; CAA67192." evidence="6" ref="3">
    <original>Q</original>
    <variation>E</variation>
    <location>
        <position position="113"/>
    </location>
</feature>
<feature type="sequence conflict" description="In Ref. 4; CAA11029/CAA11030." evidence="6" ref="4">
    <original>G</original>
    <variation>W</variation>
    <location>
        <position position="129"/>
    </location>
</feature>
<feature type="sequence conflict" description="In Ref. 4; CAA11030." evidence="6" ref="4">
    <original>AY</original>
    <variation>PS</variation>
    <location>
        <begin position="135"/>
        <end position="136"/>
    </location>
</feature>
<feature type="sequence conflict" description="In Ref. 1; CAA35188." evidence="6" ref="1">
    <original>G</original>
    <variation>A</variation>
    <location>
        <position position="143"/>
    </location>
</feature>
<feature type="sequence conflict" description="In Ref. 4; CAA11030." evidence="6" ref="4">
    <original>L</original>
    <variation>SS</variation>
    <location>
        <position position="148"/>
    </location>
</feature>
<protein>
    <recommendedName>
        <fullName>Trypsin inhibitor CMe</fullName>
    </recommendedName>
    <alternativeName>
        <fullName>Alpha-amylase/trypsin inhibitor</fullName>
    </alternativeName>
    <alternativeName>
        <fullName>BTI-CMe1</fullName>
    </alternativeName>
    <alternativeName>
        <fullName>BTI-CMe2.1</fullName>
    </alternativeName>
    <alternativeName>
        <fullName>BTI-CMe3.1</fullName>
    </alternativeName>
    <alternativeName>
        <fullName>Chloroform/methanol-soluble protein CMe</fullName>
    </alternativeName>
</protein>
<keyword id="KW-0903">Direct protein sequencing</keyword>
<keyword id="KW-1015">Disulfide bond</keyword>
<keyword id="KW-0646">Protease inhibitor</keyword>
<keyword id="KW-0964">Secreted</keyword>
<keyword id="KW-0722">Serine protease inhibitor</keyword>
<keyword id="KW-0732">Signal</keyword>
<accession>P01086</accession>
<accession>O49864</accession>
<accession>O49865</accession>
<accession>Q40038</accession>
<accession>Q84VU0</accession>
<accession>Q99298</accession>
<accession>Q9SCB8</accession>
<sequence length="148" mass="16136">MAFKYQLLLSAAVMLAILVATATSFGDSCAPGDALPHNPLRACRTYVVSQICHQGPRLLTSDMKRRCCDELSAIPAYCRCEALRIIMQGVVTWQGAFEGAYFKDSPNCPRERQTSYAANLVTPQECNLGTIHGSAYCPELQPGYGVVL</sequence>
<comment type="function">
    <text evidence="2">Inhibits trypsin in vitro. Probably plays a protective role through inhibition of insect midgut proteases.</text>
</comment>
<comment type="subcellular location">
    <subcellularLocation>
        <location>Secreted</location>
    </subcellularLocation>
</comment>
<comment type="tissue specificity">
    <text evidence="5">Expressed in the developing endosperm. Not detected in embryo, aleurone, coleoptile, roots and leaves.</text>
</comment>
<comment type="PTM">
    <text evidence="6">Five disulfide bonds, which are essential for the inhibitor activity, are probably present.</text>
</comment>
<comment type="miscellaneous">
    <text>The sequence heterogeneity suggests that more than one gene exists for this inhibitor. The genes may be alleles, or multiple loci could exist.</text>
</comment>
<comment type="similarity">
    <text evidence="6">Belongs to the protease inhibitor I6 (cereal trypsin/alpha-amylase inhibitor) family.</text>
</comment>
<comment type="sequence caution" evidence="6">
    <conflict type="erroneous termination">
        <sequence resource="EMBL-CDS" id="CAA35188"/>
    </conflict>
    <text>Truncated C-terminus.</text>
</comment>
<proteinExistence type="evidence at protein level"/>
<organism>
    <name type="scientific">Hordeum vulgare</name>
    <name type="common">Barley</name>
    <dbReference type="NCBI Taxonomy" id="4513"/>
    <lineage>
        <taxon>Eukaryota</taxon>
        <taxon>Viridiplantae</taxon>
        <taxon>Streptophyta</taxon>
        <taxon>Embryophyta</taxon>
        <taxon>Tracheophyta</taxon>
        <taxon>Spermatophyta</taxon>
        <taxon>Magnoliopsida</taxon>
        <taxon>Liliopsida</taxon>
        <taxon>Poales</taxon>
        <taxon>Poaceae</taxon>
        <taxon>BOP clade</taxon>
        <taxon>Pooideae</taxon>
        <taxon>Triticodae</taxon>
        <taxon>Triticeae</taxon>
        <taxon>Hordeinae</taxon>
        <taxon>Hordeum</taxon>
    </lineage>
</organism>
<dbReference type="EMBL" id="X17302">
    <property type="protein sequence ID" value="CAA35188.1"/>
    <property type="status" value="ALT_SEQ"/>
    <property type="molecule type" value="mRNA"/>
</dbReference>
<dbReference type="EMBL" id="X65875">
    <property type="protein sequence ID" value="CAA46705.1"/>
    <property type="molecule type" value="Genomic_DNA"/>
</dbReference>
<dbReference type="EMBL" id="X98593">
    <property type="protein sequence ID" value="CAA67192.1"/>
    <property type="molecule type" value="Genomic_DNA"/>
</dbReference>
<dbReference type="EMBL" id="AJ222977">
    <property type="protein sequence ID" value="CAA11029.1"/>
    <property type="molecule type" value="Genomic_DNA"/>
</dbReference>
<dbReference type="EMBL" id="AJ222978">
    <property type="protein sequence ID" value="CAA11030.1"/>
    <property type="molecule type" value="Genomic_DNA"/>
</dbReference>
<dbReference type="EMBL" id="AJ251931">
    <property type="protein sequence ID" value="CAB64342.1"/>
    <property type="molecule type" value="Genomic_DNA"/>
</dbReference>
<dbReference type="PIR" id="S21451">
    <property type="entry name" value="TIBH"/>
</dbReference>
<dbReference type="SMR" id="P01086"/>
<dbReference type="Allergome" id="8779">
    <property type="allergen name" value="Hor v BTI"/>
</dbReference>
<dbReference type="GO" id="GO:0005576">
    <property type="term" value="C:extracellular region"/>
    <property type="evidence" value="ECO:0007669"/>
    <property type="project" value="UniProtKB-SubCell"/>
</dbReference>
<dbReference type="GO" id="GO:0004867">
    <property type="term" value="F:serine-type endopeptidase inhibitor activity"/>
    <property type="evidence" value="ECO:0000314"/>
    <property type="project" value="UniProtKB"/>
</dbReference>
<dbReference type="GO" id="GO:0006952">
    <property type="term" value="P:defense response"/>
    <property type="evidence" value="ECO:0000314"/>
    <property type="project" value="UniProtKB"/>
</dbReference>
<dbReference type="CDD" id="cd00261">
    <property type="entry name" value="AAI_SS"/>
    <property type="match status" value="1"/>
</dbReference>
<dbReference type="FunFam" id="1.10.110.10:FF:000020">
    <property type="entry name" value="Trypsin inhibitor CMe"/>
    <property type="match status" value="1"/>
</dbReference>
<dbReference type="Gene3D" id="1.10.110.10">
    <property type="entry name" value="Plant lipid-transfer and hydrophobic proteins"/>
    <property type="match status" value="1"/>
</dbReference>
<dbReference type="InterPro" id="IPR006106">
    <property type="entry name" value="Allergen/soft/tryp_amyl_inhib"/>
</dbReference>
<dbReference type="InterPro" id="IPR006105">
    <property type="entry name" value="Allergen/tryp_amyl_inhib_CS"/>
</dbReference>
<dbReference type="InterPro" id="IPR036312">
    <property type="entry name" value="Bifun_inhib/LTP/seed_sf"/>
</dbReference>
<dbReference type="InterPro" id="IPR016140">
    <property type="entry name" value="Bifunc_inhib/LTP/seed_store"/>
</dbReference>
<dbReference type="PANTHER" id="PTHR34481">
    <property type="entry name" value="TRYPSIN/FACTOR XIIA INHIBITOR-RELATED"/>
    <property type="match status" value="1"/>
</dbReference>
<dbReference type="PANTHER" id="PTHR34481:SF15">
    <property type="entry name" value="TRYPSIN_ALPHA-AMYLASE INHIBITOR CMX1_CMX3"/>
    <property type="match status" value="1"/>
</dbReference>
<dbReference type="Pfam" id="PF00234">
    <property type="entry name" value="Tryp_alpha_amyl"/>
    <property type="match status" value="1"/>
</dbReference>
<dbReference type="PRINTS" id="PR00808">
    <property type="entry name" value="AMLASEINHBTR"/>
</dbReference>
<dbReference type="SMART" id="SM00499">
    <property type="entry name" value="AAI"/>
    <property type="match status" value="1"/>
</dbReference>
<dbReference type="SUPFAM" id="SSF47699">
    <property type="entry name" value="Bifunctional inhibitor/lipid-transfer protein/seed storage 2S albumin"/>
    <property type="match status" value="1"/>
</dbReference>
<dbReference type="PROSITE" id="PS00426">
    <property type="entry name" value="CEREAL_TRYP_AMYL_INH"/>
    <property type="match status" value="1"/>
</dbReference>
<name>IAAE_HORVU</name>
<reference key="1">
    <citation type="journal article" date="1989" name="Mol. Gen. Genet.">
        <title>The gene for trypsin inhibitor CMe is regulated in trans by the lys 3a locus in the endosperm of barley (Hordeum vulgare L.).</title>
        <authorList>
            <person name="Rodriguez-Palenzuela P."/>
            <person name="Royo J."/>
            <person name="Gomez L."/>
            <person name="Sanchez-Monge R."/>
            <person name="Salcedo G."/>
            <person name="Molina-Cano J.L."/>
            <person name="Garcia-Olmedo F."/>
            <person name="Carbonero P."/>
        </authorList>
    </citation>
    <scope>NUCLEOTIDE SEQUENCE [MRNA]</scope>
</reference>
<reference key="2">
    <citation type="journal article" date="1996" name="Plant Mol. Biol.">
        <title>Isolation and promoter characterization of barley gene Itr1 encoding trypsin inhibitor BTI-CMe: differential activity in wild-type and mutant lys3a endosperm.</title>
        <authorList>
            <person name="Royo J."/>
            <person name="Diaz I."/>
            <person name="Rodriquez-Palenzuela P."/>
            <person name="Carbonero P."/>
        </authorList>
    </citation>
    <scope>NUCLEOTIDE SEQUENCE [GENOMIC DNA]</scope>
    <source>
        <strain>cv. Villa</strain>
        <tissue>Endosperm</tissue>
    </source>
</reference>
<reference key="3">
    <citation type="submission" date="1996-06" db="EMBL/GenBank/DDBJ databases">
        <authorList>
            <person name="Gaddour K."/>
            <person name="Vicente-Carbajosa J."/>
            <person name="Royo J."/>
            <person name="Carbonero P."/>
        </authorList>
    </citation>
    <scope>NUCLEOTIDE SEQUENCE [GENOMIC DNA]</scope>
    <source>
        <strain>cv. Hatif de Grignon</strain>
    </source>
</reference>
<reference key="4">
    <citation type="submission" date="1999-12" db="EMBL/GenBank/DDBJ databases">
        <authorList>
            <person name="Royo J."/>
        </authorList>
    </citation>
    <scope>NUCLEOTIDE SEQUENCE [GENOMIC DNA]</scope>
    <source>
        <strain>cv. Albacete</strain>
        <strain>cv. Hatif de Grignon</strain>
        <strain>cv. Valticky</strain>
        <tissue>Endosperm</tissue>
    </source>
</reference>
<reference key="5">
    <citation type="journal article" date="1983" name="J. Biol. Chem.">
        <title>The complete amino acid sequence of barley trypsin inhibitor.</title>
        <authorList>
            <person name="Odani S."/>
            <person name="Koide T."/>
            <person name="Ono T."/>
        </authorList>
    </citation>
    <scope>PROTEIN SEQUENCE OF 25-144</scope>
</reference>
<reference key="6">
    <citation type="journal article" date="1982" name="FEBS Lett.">
        <title>Sequence homology between barley trypsin inhibitor and wheat alpha-amylase inhibitors.</title>
        <authorList>
            <person name="Odani S."/>
            <person name="Koide T."/>
            <person name="Ono T."/>
        </authorList>
    </citation>
    <scope>PROTEIN SEQUENCE OF 25-64</scope>
</reference>
<reference key="7">
    <citation type="journal article" date="2000" name="Electrophoresis">
        <title>Separation and characterization of basic barley seed proteins.</title>
        <authorList>
            <person name="Kristoffersen H.E."/>
            <person name="Flengsrud R."/>
        </authorList>
    </citation>
    <scope>PROTEIN SEQUENCE OF 25-42</scope>
    <source>
        <strain>cv. Bomi</strain>
        <tissue>Starchy endosperm</tissue>
    </source>
</reference>
<reference key="8">
    <citation type="journal article" date="1995" name="Mol. Gen. Genet.">
        <title>The promoter of the gene Itr1 from barley confers a different tissue specificity in transgenic tobacco.</title>
        <authorList>
            <person name="Diaz I."/>
            <person name="Royo J."/>
            <person name="O'Connor A."/>
            <person name="Carbonero P."/>
        </authorList>
    </citation>
    <scope>TISSUE SPECIFICITY</scope>
</reference>
<reference key="9">
    <citation type="journal article" date="2003" name="Transgenic Res.">
        <title>Transgenic expression of trypsin inhibitor CMe from barley in indica and japonica rice, confers resistance to the rice weevil Sitophilus oryzae.</title>
        <authorList>
            <person name="Alfonso-Rubi J."/>
            <person name="Ortego F."/>
            <person name="Castanera P."/>
            <person name="Carbonero P."/>
            <person name="Diaz I."/>
        </authorList>
    </citation>
    <scope>FUNCTION</scope>
</reference>
<gene>
    <name type="primary">ITR1</name>
</gene>
<evidence type="ECO:0000269" key="1">
    <source>
    </source>
</evidence>
<evidence type="ECO:0000269" key="2">
    <source>
    </source>
</evidence>
<evidence type="ECO:0000269" key="3">
    <source>
    </source>
</evidence>
<evidence type="ECO:0000269" key="4">
    <source>
    </source>
</evidence>
<evidence type="ECO:0000269" key="5">
    <source>
    </source>
</evidence>
<evidence type="ECO:0000305" key="6"/>